<comment type="function">
    <text evidence="1">Catalyzes the synthesis of activated sulfate.</text>
</comment>
<comment type="catalytic activity">
    <reaction evidence="1">
        <text>adenosine 5'-phosphosulfate + ATP = 3'-phosphoadenylyl sulfate + ADP + H(+)</text>
        <dbReference type="Rhea" id="RHEA:24152"/>
        <dbReference type="ChEBI" id="CHEBI:15378"/>
        <dbReference type="ChEBI" id="CHEBI:30616"/>
        <dbReference type="ChEBI" id="CHEBI:58243"/>
        <dbReference type="ChEBI" id="CHEBI:58339"/>
        <dbReference type="ChEBI" id="CHEBI:456216"/>
        <dbReference type="EC" id="2.7.1.25"/>
    </reaction>
</comment>
<comment type="pathway">
    <text evidence="1">Sulfur metabolism; hydrogen sulfide biosynthesis; sulfite from sulfate: step 2/3.</text>
</comment>
<comment type="similarity">
    <text evidence="1">Belongs to the APS kinase family.</text>
</comment>
<protein>
    <recommendedName>
        <fullName evidence="1">Adenylyl-sulfate kinase</fullName>
        <ecNumber evidence="1">2.7.1.25</ecNumber>
    </recommendedName>
    <alternativeName>
        <fullName evidence="1">APS kinase</fullName>
    </alternativeName>
    <alternativeName>
        <fullName evidence="1">ATP adenosine-5'-phosphosulfate 3'-phosphotransferase</fullName>
    </alternativeName>
    <alternativeName>
        <fullName evidence="1">Adenosine-5'-phosphosulfate kinase</fullName>
    </alternativeName>
</protein>
<evidence type="ECO:0000255" key="1">
    <source>
        <dbReference type="HAMAP-Rule" id="MF_00065"/>
    </source>
</evidence>
<dbReference type="EC" id="2.7.1.25" evidence="1"/>
<dbReference type="EMBL" id="CP000002">
    <property type="protein sequence ID" value="AAU23316.1"/>
    <property type="molecule type" value="Genomic_DNA"/>
</dbReference>
<dbReference type="EMBL" id="AE017333">
    <property type="protein sequence ID" value="AAU40676.1"/>
    <property type="molecule type" value="Genomic_DNA"/>
</dbReference>
<dbReference type="RefSeq" id="WP_003181642.1">
    <property type="nucleotide sequence ID" value="NC_006322.1"/>
</dbReference>
<dbReference type="SMR" id="Q65JT8"/>
<dbReference type="STRING" id="279010.BL02285"/>
<dbReference type="GeneID" id="92861626"/>
<dbReference type="KEGG" id="bld:BLi01781"/>
<dbReference type="KEGG" id="bli:BL02285"/>
<dbReference type="eggNOG" id="COG0529">
    <property type="taxonomic scope" value="Bacteria"/>
</dbReference>
<dbReference type="HOGENOM" id="CLU_046932_1_0_9"/>
<dbReference type="UniPathway" id="UPA00140">
    <property type="reaction ID" value="UER00205"/>
</dbReference>
<dbReference type="Proteomes" id="UP000000606">
    <property type="component" value="Chromosome"/>
</dbReference>
<dbReference type="GO" id="GO:0004020">
    <property type="term" value="F:adenylylsulfate kinase activity"/>
    <property type="evidence" value="ECO:0007669"/>
    <property type="project" value="UniProtKB-UniRule"/>
</dbReference>
<dbReference type="GO" id="GO:0005524">
    <property type="term" value="F:ATP binding"/>
    <property type="evidence" value="ECO:0007669"/>
    <property type="project" value="UniProtKB-UniRule"/>
</dbReference>
<dbReference type="GO" id="GO:0070814">
    <property type="term" value="P:hydrogen sulfide biosynthetic process"/>
    <property type="evidence" value="ECO:0007669"/>
    <property type="project" value="UniProtKB-UniRule"/>
</dbReference>
<dbReference type="GO" id="GO:0000103">
    <property type="term" value="P:sulfate assimilation"/>
    <property type="evidence" value="ECO:0007669"/>
    <property type="project" value="UniProtKB-UniRule"/>
</dbReference>
<dbReference type="CDD" id="cd02027">
    <property type="entry name" value="APSK"/>
    <property type="match status" value="1"/>
</dbReference>
<dbReference type="FunFam" id="3.40.50.300:FF:000212">
    <property type="entry name" value="Adenylyl-sulfate kinase"/>
    <property type="match status" value="1"/>
</dbReference>
<dbReference type="Gene3D" id="3.40.50.300">
    <property type="entry name" value="P-loop containing nucleotide triphosphate hydrolases"/>
    <property type="match status" value="1"/>
</dbReference>
<dbReference type="HAMAP" id="MF_00065">
    <property type="entry name" value="Adenylyl_sulf_kinase"/>
    <property type="match status" value="1"/>
</dbReference>
<dbReference type="InterPro" id="IPR002891">
    <property type="entry name" value="APS_kinase"/>
</dbReference>
<dbReference type="InterPro" id="IPR027417">
    <property type="entry name" value="P-loop_NTPase"/>
</dbReference>
<dbReference type="NCBIfam" id="TIGR00455">
    <property type="entry name" value="apsK"/>
    <property type="match status" value="1"/>
</dbReference>
<dbReference type="NCBIfam" id="NF003013">
    <property type="entry name" value="PRK03846.1"/>
    <property type="match status" value="1"/>
</dbReference>
<dbReference type="NCBIfam" id="NF004041">
    <property type="entry name" value="PRK05541.1"/>
    <property type="match status" value="1"/>
</dbReference>
<dbReference type="PANTHER" id="PTHR11055">
    <property type="entry name" value="BIFUNCTIONAL 3'-PHOSPHOADENOSINE 5'-PHOSPHOSULFATE SYNTHASE"/>
    <property type="match status" value="1"/>
</dbReference>
<dbReference type="PANTHER" id="PTHR11055:SF1">
    <property type="entry name" value="PAPS SYNTHETASE, ISOFORM D"/>
    <property type="match status" value="1"/>
</dbReference>
<dbReference type="Pfam" id="PF01583">
    <property type="entry name" value="APS_kinase"/>
    <property type="match status" value="1"/>
</dbReference>
<dbReference type="SUPFAM" id="SSF52540">
    <property type="entry name" value="P-loop containing nucleoside triphosphate hydrolases"/>
    <property type="match status" value="1"/>
</dbReference>
<name>CYSC_BACLD</name>
<sequence length="197" mass="22456">MVNKDIVWHEASITKREYHEKNQHKSSIIWLTGLSGSGKSTIANAAARELFAQGYQVTVLDGDNVRHGLNKDLGFSDEDRKENIRRIGEVAKLFVEQGTIVITAFISPFKEDRGLVRQLVEEDEFHEVYVKCDLATCEERDPKGLYKKARNGEIPFFTGIDSPYEEPETPELVLDTGAHNREECKNQLVQYVKDQTK</sequence>
<gene>
    <name evidence="1" type="primary">cysC</name>
    <name type="ordered locus">BLi01781</name>
    <name type="ordered locus">BL02285</name>
</gene>
<organism>
    <name type="scientific">Bacillus licheniformis (strain ATCC 14580 / DSM 13 / JCM 2505 / CCUG 7422 / NBRC 12200 / NCIMB 9375 / NCTC 10341 / NRRL NRS-1264 / Gibson 46)</name>
    <dbReference type="NCBI Taxonomy" id="279010"/>
    <lineage>
        <taxon>Bacteria</taxon>
        <taxon>Bacillati</taxon>
        <taxon>Bacillota</taxon>
        <taxon>Bacilli</taxon>
        <taxon>Bacillales</taxon>
        <taxon>Bacillaceae</taxon>
        <taxon>Bacillus</taxon>
    </lineage>
</organism>
<feature type="chain" id="PRO_1000009007" description="Adenylyl-sulfate kinase">
    <location>
        <begin position="1"/>
        <end position="197"/>
    </location>
</feature>
<feature type="active site" description="Phosphoserine intermediate" evidence="1">
    <location>
        <position position="107"/>
    </location>
</feature>
<feature type="binding site" evidence="1">
    <location>
        <begin position="33"/>
        <end position="40"/>
    </location>
    <ligand>
        <name>ATP</name>
        <dbReference type="ChEBI" id="CHEBI:30616"/>
    </ligand>
</feature>
<proteinExistence type="inferred from homology"/>
<keyword id="KW-0067">ATP-binding</keyword>
<keyword id="KW-0418">Kinase</keyword>
<keyword id="KW-0547">Nucleotide-binding</keyword>
<keyword id="KW-0597">Phosphoprotein</keyword>
<keyword id="KW-1185">Reference proteome</keyword>
<keyword id="KW-0808">Transferase</keyword>
<accession>Q65JT8</accession>
<accession>Q62V93</accession>
<reference key="1">
    <citation type="journal article" date="2004" name="J. Mol. Microbiol. Biotechnol.">
        <title>The complete genome sequence of Bacillus licheniformis DSM13, an organism with great industrial potential.</title>
        <authorList>
            <person name="Veith B."/>
            <person name="Herzberg C."/>
            <person name="Steckel S."/>
            <person name="Feesche J."/>
            <person name="Maurer K.H."/>
            <person name="Ehrenreich P."/>
            <person name="Baeumer S."/>
            <person name="Henne A."/>
            <person name="Liesegang H."/>
            <person name="Merkl R."/>
            <person name="Ehrenreich A."/>
            <person name="Gottschalk G."/>
        </authorList>
    </citation>
    <scope>NUCLEOTIDE SEQUENCE [LARGE SCALE GENOMIC DNA]</scope>
    <source>
        <strain>ATCC 14580 / DSM 13 / JCM 2505 / CCUG 7422 / NBRC 12200 / NCIMB 9375 / NCTC 10341 / NRRL NRS-1264 / Gibson 46</strain>
    </source>
</reference>
<reference key="2">
    <citation type="journal article" date="2004" name="Genome Biol.">
        <title>Complete genome sequence of the industrial bacterium Bacillus licheniformis and comparisons with closely related Bacillus species.</title>
        <authorList>
            <person name="Rey M.W."/>
            <person name="Ramaiya P."/>
            <person name="Nelson B.A."/>
            <person name="Brody-Karpin S.D."/>
            <person name="Zaretsky E.J."/>
            <person name="Tang M."/>
            <person name="Lopez de Leon A."/>
            <person name="Xiang H."/>
            <person name="Gusti V."/>
            <person name="Clausen I.G."/>
            <person name="Olsen P.B."/>
            <person name="Rasmussen M.D."/>
            <person name="Andersen J.T."/>
            <person name="Joergensen P.L."/>
            <person name="Larsen T.S."/>
            <person name="Sorokin A."/>
            <person name="Bolotin A."/>
            <person name="Lapidus A."/>
            <person name="Galleron N."/>
            <person name="Ehrlich S.D."/>
            <person name="Berka R.M."/>
        </authorList>
    </citation>
    <scope>NUCLEOTIDE SEQUENCE [LARGE SCALE GENOMIC DNA]</scope>
    <source>
        <strain>ATCC 14580 / DSM 13 / JCM 2505 / CCUG 7422 / NBRC 12200 / NCIMB 9375 / NCTC 10341 / NRRL NRS-1264 / Gibson 46</strain>
    </source>
</reference>